<sequence>MKGMILFISCLLLIGIVVECKEGYLMDHEGCKLSCFIRPSGYCGSECKIKKGSSGYCAWPACYCYGLPNWVKVWDRATNKCGKK</sequence>
<organism>
    <name type="scientific">Tityus bahiensis</name>
    <name type="common">Brazilian scorpion</name>
    <dbReference type="NCBI Taxonomy" id="50343"/>
    <lineage>
        <taxon>Eukaryota</taxon>
        <taxon>Metazoa</taxon>
        <taxon>Ecdysozoa</taxon>
        <taxon>Arthropoda</taxon>
        <taxon>Chelicerata</taxon>
        <taxon>Arachnida</taxon>
        <taxon>Scorpiones</taxon>
        <taxon>Buthida</taxon>
        <taxon>Buthoidea</taxon>
        <taxon>Buthidae</taxon>
        <taxon>Tityus</taxon>
    </lineage>
</organism>
<protein>
    <recommendedName>
        <fullName>Toxin Tb1</fullName>
    </recommendedName>
    <alternativeName>
        <fullName>PT-Mice-beta* NaTx6.2</fullName>
    </alternativeName>
    <alternativeName>
        <fullName>Tb-gamma</fullName>
    </alternativeName>
</protein>
<keyword id="KW-0027">Amidation</keyword>
<keyword id="KW-0903">Direct protein sequencing</keyword>
<keyword id="KW-1015">Disulfide bond</keyword>
<keyword id="KW-0872">Ion channel impairing toxin</keyword>
<keyword id="KW-0528">Neurotoxin</keyword>
<keyword id="KW-0964">Secreted</keyword>
<keyword id="KW-0732">Signal</keyword>
<keyword id="KW-0800">Toxin</keyword>
<keyword id="KW-0738">Voltage-gated sodium channel impairing toxin</keyword>
<comment type="function">
    <text evidence="1 3">Beta toxins bind voltage-independently at site-4 of sodium channels (Nav) and shift the voltage of activation toward more negative potentials thereby affecting sodium channel activation and promoting spontaneous and repetitive firing (By similarity). Is lethal to mice (PubMed:8611151).</text>
</comment>
<comment type="subcellular location">
    <subcellularLocation>
        <location>Secreted</location>
    </subcellularLocation>
</comment>
<comment type="tissue specificity">
    <text>Expressed by the venom gland.</text>
</comment>
<comment type="domain">
    <text evidence="4">Has the structural arrangement of an alpha-helix connected to antiparallel beta-sheets by disulfide bonds (CS-alpha/beta).</text>
</comment>
<comment type="similarity">
    <text evidence="4">Belongs to the long (4 C-C) scorpion toxin superfamily. Sodium channel inhibitor family. Beta subfamily.</text>
</comment>
<name>SCX1_TITBA</name>
<accession>P56611</accession>
<feature type="signal peptide" evidence="3">
    <location>
        <begin position="1"/>
        <end position="20"/>
    </location>
</feature>
<feature type="chain" id="PRO_0000035298" description="Toxin Tb1">
    <location>
        <begin position="21"/>
        <end position="81"/>
    </location>
</feature>
<feature type="domain" description="LCN-type CS-alpha/beta" evidence="2">
    <location>
        <begin position="21"/>
        <end position="82"/>
    </location>
</feature>
<feature type="modified residue" description="Cysteine amide" evidence="5">
    <location>
        <position position="81"/>
    </location>
</feature>
<feature type="disulfide bond" evidence="2">
    <location>
        <begin position="31"/>
        <end position="81"/>
    </location>
</feature>
<feature type="disulfide bond" evidence="2">
    <location>
        <begin position="35"/>
        <end position="57"/>
    </location>
</feature>
<feature type="disulfide bond" evidence="2">
    <location>
        <begin position="43"/>
        <end position="62"/>
    </location>
</feature>
<feature type="disulfide bond" evidence="2">
    <location>
        <begin position="47"/>
        <end position="64"/>
    </location>
</feature>
<evidence type="ECO:0000250" key="1"/>
<evidence type="ECO:0000255" key="2">
    <source>
        <dbReference type="PROSITE-ProRule" id="PRU01210"/>
    </source>
</evidence>
<evidence type="ECO:0000269" key="3">
    <source>
    </source>
</evidence>
<evidence type="ECO:0000305" key="4"/>
<evidence type="ECO:0000305" key="5">
    <source>
    </source>
</evidence>
<reference key="1">
    <citation type="journal article" date="1996" name="Biochem. J.">
        <title>Toxic peptides and genes encoding toxin gamma of the Brazilian scorpions Tityus bahiensis and Tityus stigmurus.</title>
        <authorList>
            <person name="Becerril B."/>
            <person name="Corona M."/>
            <person name="Coronas F.I."/>
            <person name="Zamudio F.Z."/>
            <person name="Calderon-Aranda E.S."/>
            <person name="Fletcher P.L. Jr."/>
            <person name="Martin B.M."/>
            <person name="Possani L.D."/>
        </authorList>
    </citation>
    <scope>NUCLEOTIDE SEQUENCE [GENOMIC DNA]</scope>
    <scope>PROTEIN SEQUENCE OF 21-81</scope>
    <scope>AMIDATION AT CYS-81</scope>
    <scope>BIOASSAY</scope>
    <source>
        <tissue>Venom</tissue>
    </source>
</reference>
<reference key="2">
    <citation type="journal article" date="2012" name="PLoS ONE">
        <title>Identification and phylogenetic analysis of Tityus pachyurus and Tityus obscurus novel putative Na+-channel scorpion toxins.</title>
        <authorList>
            <person name="Guerrero-Vargas J.A."/>
            <person name="Mourao C.B."/>
            <person name="Quintero-Hernandez V."/>
            <person name="Possani L.D."/>
            <person name="Schwartz E.F."/>
        </authorList>
    </citation>
    <scope>NOMENCLATURE</scope>
</reference>
<dbReference type="PIR" id="S62868">
    <property type="entry name" value="S62868"/>
</dbReference>
<dbReference type="SMR" id="P56611"/>
<dbReference type="GO" id="GO:0005576">
    <property type="term" value="C:extracellular region"/>
    <property type="evidence" value="ECO:0007669"/>
    <property type="project" value="UniProtKB-SubCell"/>
</dbReference>
<dbReference type="GO" id="GO:0019871">
    <property type="term" value="F:sodium channel inhibitor activity"/>
    <property type="evidence" value="ECO:0007669"/>
    <property type="project" value="InterPro"/>
</dbReference>
<dbReference type="GO" id="GO:0090729">
    <property type="term" value="F:toxin activity"/>
    <property type="evidence" value="ECO:0007669"/>
    <property type="project" value="UniProtKB-KW"/>
</dbReference>
<dbReference type="GO" id="GO:0006952">
    <property type="term" value="P:defense response"/>
    <property type="evidence" value="ECO:0007669"/>
    <property type="project" value="InterPro"/>
</dbReference>
<dbReference type="CDD" id="cd23106">
    <property type="entry name" value="neurotoxins_LC_scorpion"/>
    <property type="match status" value="1"/>
</dbReference>
<dbReference type="FunFam" id="3.30.30.10:FF:000002">
    <property type="entry name" value="Alpha-like toxin BmK-M1"/>
    <property type="match status" value="1"/>
</dbReference>
<dbReference type="Gene3D" id="3.30.30.10">
    <property type="entry name" value="Knottin, scorpion toxin-like"/>
    <property type="match status" value="1"/>
</dbReference>
<dbReference type="InterPro" id="IPR044062">
    <property type="entry name" value="LCN-type_CS_alpha_beta_dom"/>
</dbReference>
<dbReference type="InterPro" id="IPR003614">
    <property type="entry name" value="Scorpion_toxin-like"/>
</dbReference>
<dbReference type="InterPro" id="IPR036574">
    <property type="entry name" value="Scorpion_toxin-like_sf"/>
</dbReference>
<dbReference type="InterPro" id="IPR018218">
    <property type="entry name" value="Scorpion_toxinL"/>
</dbReference>
<dbReference type="InterPro" id="IPR002061">
    <property type="entry name" value="Scorpion_toxinL/defensin"/>
</dbReference>
<dbReference type="Pfam" id="PF00537">
    <property type="entry name" value="Toxin_3"/>
    <property type="match status" value="1"/>
</dbReference>
<dbReference type="PRINTS" id="PR00285">
    <property type="entry name" value="SCORPNTOXIN"/>
</dbReference>
<dbReference type="SMART" id="SM00505">
    <property type="entry name" value="Knot1"/>
    <property type="match status" value="1"/>
</dbReference>
<dbReference type="SUPFAM" id="SSF57095">
    <property type="entry name" value="Scorpion toxin-like"/>
    <property type="match status" value="1"/>
</dbReference>
<dbReference type="PROSITE" id="PS51863">
    <property type="entry name" value="LCN_CSAB"/>
    <property type="match status" value="1"/>
</dbReference>
<proteinExistence type="evidence at protein level"/>